<feature type="chain" id="PRO_0000071963" description="SAM and SH3 domain-containing protein 3">
    <location>
        <begin position="1"/>
        <end position="380"/>
    </location>
</feature>
<feature type="domain" description="SH3" evidence="3">
    <location>
        <begin position="173"/>
        <end position="234"/>
    </location>
</feature>
<feature type="domain" description="SAM" evidence="2">
    <location>
        <begin position="252"/>
        <end position="316"/>
    </location>
</feature>
<feature type="region of interest" description="Disordered" evidence="4">
    <location>
        <begin position="1"/>
        <end position="76"/>
    </location>
</feature>
<feature type="region of interest" description="Disordered" evidence="4">
    <location>
        <begin position="96"/>
        <end position="168"/>
    </location>
</feature>
<feature type="region of interest" description="Disordered" evidence="4">
    <location>
        <begin position="318"/>
        <end position="380"/>
    </location>
</feature>
<feature type="compositionally biased region" description="Low complexity" evidence="4">
    <location>
        <begin position="22"/>
        <end position="41"/>
    </location>
</feature>
<feature type="compositionally biased region" description="Polar residues" evidence="4">
    <location>
        <begin position="141"/>
        <end position="150"/>
    </location>
</feature>
<feature type="compositionally biased region" description="Acidic residues" evidence="4">
    <location>
        <begin position="318"/>
        <end position="327"/>
    </location>
</feature>
<feature type="compositionally biased region" description="Polar residues" evidence="4">
    <location>
        <begin position="369"/>
        <end position="380"/>
    </location>
</feature>
<feature type="modified residue" description="Phosphoserine" evidence="1">
    <location>
        <position position="27"/>
    </location>
</feature>
<feature type="modified residue" description="Phosphoserine" evidence="1">
    <location>
        <position position="34"/>
    </location>
</feature>
<feature type="modified residue" description="Phosphoserine" evidence="7">
    <location>
        <position position="42"/>
    </location>
</feature>
<feature type="modified residue" description="Phosphothreonine" evidence="1">
    <location>
        <position position="61"/>
    </location>
</feature>
<feature type="modified residue" description="Phosphoserine" evidence="7">
    <location>
        <position position="97"/>
    </location>
</feature>
<feature type="modified residue" description="Phosphothreonine" evidence="1">
    <location>
        <position position="103"/>
    </location>
</feature>
<feature type="modified residue" description="Phosphoserine" evidence="1">
    <location>
        <position position="110"/>
    </location>
</feature>
<feature type="modified residue" description="Phosphothreonine" evidence="1">
    <location>
        <position position="112"/>
    </location>
</feature>
<feature type="modified residue" description="Phosphoserine" evidence="1">
    <location>
        <position position="113"/>
    </location>
</feature>
<feature type="modified residue" description="Phosphoserine" evidence="1">
    <location>
        <position position="120"/>
    </location>
</feature>
<feature type="modified residue" description="Phosphothreonine" evidence="7">
    <location>
        <position position="318"/>
    </location>
</feature>
<feature type="modified residue" description="Phosphoserine" evidence="7">
    <location>
        <position position="320"/>
    </location>
</feature>
<feature type="sequence conflict" description="In Ref. 3; AAH28773." evidence="6" ref="3">
    <original>T</original>
    <variation>TA</variation>
    <location>
        <position position="318"/>
    </location>
</feature>
<feature type="helix" evidence="8">
    <location>
        <begin position="257"/>
        <end position="263"/>
    </location>
</feature>
<feature type="helix" evidence="8">
    <location>
        <begin position="267"/>
        <end position="269"/>
    </location>
</feature>
<feature type="helix" evidence="8">
    <location>
        <begin position="270"/>
        <end position="275"/>
    </location>
</feature>
<feature type="helix" evidence="8">
    <location>
        <begin position="281"/>
        <end position="284"/>
    </location>
</feature>
<feature type="helix" evidence="8">
    <location>
        <begin position="289"/>
        <end position="294"/>
    </location>
</feature>
<feature type="helix" evidence="8">
    <location>
        <begin position="300"/>
        <end position="316"/>
    </location>
</feature>
<dbReference type="EMBL" id="AJ306422">
    <property type="protein sequence ID" value="CAC67499.1"/>
    <property type="molecule type" value="mRNA"/>
</dbReference>
<dbReference type="EMBL" id="AK004734">
    <property type="protein sequence ID" value="BAB23516.1"/>
    <property type="molecule type" value="mRNA"/>
</dbReference>
<dbReference type="EMBL" id="AK156202">
    <property type="protein sequence ID" value="BAE33623.1"/>
    <property type="molecule type" value="mRNA"/>
</dbReference>
<dbReference type="EMBL" id="AK171017">
    <property type="protein sequence ID" value="BAE42187.1"/>
    <property type="molecule type" value="mRNA"/>
</dbReference>
<dbReference type="EMBL" id="BC028773">
    <property type="protein sequence ID" value="AAH28773.1"/>
    <property type="molecule type" value="mRNA"/>
</dbReference>
<dbReference type="CCDS" id="CCDS40959.1"/>
<dbReference type="RefSeq" id="NP_001300678.1">
    <property type="nucleotide sequence ID" value="NM_001313749.1"/>
</dbReference>
<dbReference type="RefSeq" id="NP_083049.1">
    <property type="nucleotide sequence ID" value="NM_028773.4"/>
</dbReference>
<dbReference type="PDB" id="6FXF">
    <property type="method" value="X-ray"/>
    <property type="resolution" value="2.05 A"/>
    <property type="chains" value="A=254-317"/>
</dbReference>
<dbReference type="PDB" id="6G8O">
    <property type="method" value="NMR"/>
    <property type="chains" value="A/B=254-321"/>
</dbReference>
<dbReference type="PDBsum" id="6FXF"/>
<dbReference type="PDBsum" id="6G8O"/>
<dbReference type="SMR" id="Q8K352"/>
<dbReference type="BioGRID" id="216514">
    <property type="interactions" value="3"/>
</dbReference>
<dbReference type="FunCoup" id="Q8K352">
    <property type="interactions" value="1535"/>
</dbReference>
<dbReference type="MINT" id="Q8K352"/>
<dbReference type="STRING" id="10090.ENSMUSP00000033427"/>
<dbReference type="iPTMnet" id="Q8K352"/>
<dbReference type="PhosphoSitePlus" id="Q8K352"/>
<dbReference type="jPOST" id="Q8K352"/>
<dbReference type="PaxDb" id="10090-ENSMUSP00000033427"/>
<dbReference type="PeptideAtlas" id="Q8K352"/>
<dbReference type="ProteomicsDB" id="256731"/>
<dbReference type="Antibodypedia" id="381">
    <property type="antibodies" value="44 antibodies from 16 providers"/>
</dbReference>
<dbReference type="DNASU" id="74131"/>
<dbReference type="Ensembl" id="ENSMUST00000033427.7">
    <property type="protein sequence ID" value="ENSMUSP00000033427.7"/>
    <property type="gene ID" value="ENSMUSG00000031101.7"/>
</dbReference>
<dbReference type="GeneID" id="74131"/>
<dbReference type="KEGG" id="mmu:74131"/>
<dbReference type="UCSC" id="uc009tbw.1">
    <property type="organism name" value="mouse"/>
</dbReference>
<dbReference type="AGR" id="MGI:1921381"/>
<dbReference type="CTD" id="54440"/>
<dbReference type="MGI" id="MGI:1921381">
    <property type="gene designation" value="Sash3"/>
</dbReference>
<dbReference type="VEuPathDB" id="HostDB:ENSMUSG00000031101"/>
<dbReference type="eggNOG" id="KOG4384">
    <property type="taxonomic scope" value="Eukaryota"/>
</dbReference>
<dbReference type="GeneTree" id="ENSGT00940000160111"/>
<dbReference type="HOGENOM" id="CLU_027875_0_0_1"/>
<dbReference type="InParanoid" id="Q8K352"/>
<dbReference type="OMA" id="DKEPTQK"/>
<dbReference type="OrthoDB" id="10047268at2759"/>
<dbReference type="PhylomeDB" id="Q8K352"/>
<dbReference type="TreeFam" id="TF350709"/>
<dbReference type="BioGRID-ORCS" id="74131">
    <property type="hits" value="1 hit in 76 CRISPR screens"/>
</dbReference>
<dbReference type="ChiTaRS" id="Sly">
    <property type="organism name" value="mouse"/>
</dbReference>
<dbReference type="PRO" id="PR:Q8K352"/>
<dbReference type="Proteomes" id="UP000000589">
    <property type="component" value="Chromosome X"/>
</dbReference>
<dbReference type="RNAct" id="Q8K352">
    <property type="molecule type" value="protein"/>
</dbReference>
<dbReference type="Bgee" id="ENSMUSG00000031101">
    <property type="expression patterns" value="Expressed in thymus and 120 other cell types or tissues"/>
</dbReference>
<dbReference type="GO" id="GO:0005737">
    <property type="term" value="C:cytoplasm"/>
    <property type="evidence" value="ECO:0000314"/>
    <property type="project" value="MGI"/>
</dbReference>
<dbReference type="GO" id="GO:0005634">
    <property type="term" value="C:nucleus"/>
    <property type="evidence" value="ECO:0000314"/>
    <property type="project" value="MGI"/>
</dbReference>
<dbReference type="GO" id="GO:0001782">
    <property type="term" value="P:B cell homeostasis"/>
    <property type="evidence" value="ECO:0000315"/>
    <property type="project" value="MGI"/>
</dbReference>
<dbReference type="GO" id="GO:0042100">
    <property type="term" value="P:B cell proliferation"/>
    <property type="evidence" value="ECO:0000315"/>
    <property type="project" value="MGI"/>
</dbReference>
<dbReference type="GO" id="GO:0043367">
    <property type="term" value="P:CD4-positive, alpha-beta T cell differentiation"/>
    <property type="evidence" value="ECO:0000315"/>
    <property type="project" value="MGI"/>
</dbReference>
<dbReference type="GO" id="GO:0048873">
    <property type="term" value="P:homeostasis of number of cells within a tissue"/>
    <property type="evidence" value="ECO:0000315"/>
    <property type="project" value="MGI"/>
</dbReference>
<dbReference type="GO" id="GO:0002821">
    <property type="term" value="P:positive regulation of adaptive immune response"/>
    <property type="evidence" value="ECO:0000315"/>
    <property type="project" value="MGI"/>
</dbReference>
<dbReference type="GO" id="GO:0030890">
    <property type="term" value="P:positive regulation of B cell proliferation"/>
    <property type="evidence" value="ECO:0000315"/>
    <property type="project" value="MGI"/>
</dbReference>
<dbReference type="GO" id="GO:0043372">
    <property type="term" value="P:positive regulation of CD4-positive, alpha-beta T cell differentiation"/>
    <property type="evidence" value="ECO:0000315"/>
    <property type="project" value="MGI"/>
</dbReference>
<dbReference type="GO" id="GO:0002639">
    <property type="term" value="P:positive regulation of immunoglobulin production"/>
    <property type="evidence" value="ECO:0000315"/>
    <property type="project" value="MGI"/>
</dbReference>
<dbReference type="GO" id="GO:0032733">
    <property type="term" value="P:positive regulation of interleukin-10 production"/>
    <property type="evidence" value="ECO:0000315"/>
    <property type="project" value="MGI"/>
</dbReference>
<dbReference type="GO" id="GO:0032743">
    <property type="term" value="P:positive regulation of interleukin-2 production"/>
    <property type="evidence" value="ECO:0000315"/>
    <property type="project" value="MGI"/>
</dbReference>
<dbReference type="GO" id="GO:0032753">
    <property type="term" value="P:positive regulation of interleukin-4 production"/>
    <property type="evidence" value="ECO:0000315"/>
    <property type="project" value="MGI"/>
</dbReference>
<dbReference type="GO" id="GO:0051251">
    <property type="term" value="P:positive regulation of lymphocyte activation"/>
    <property type="evidence" value="ECO:0000315"/>
    <property type="project" value="MGI"/>
</dbReference>
<dbReference type="GO" id="GO:0046622">
    <property type="term" value="P:positive regulation of organ growth"/>
    <property type="evidence" value="ECO:0000315"/>
    <property type="project" value="MGI"/>
</dbReference>
<dbReference type="GO" id="GO:0002726">
    <property type="term" value="P:positive regulation of T cell cytokine production"/>
    <property type="evidence" value="ECO:0000315"/>
    <property type="project" value="MGI"/>
</dbReference>
<dbReference type="GO" id="GO:0042102">
    <property type="term" value="P:positive regulation of T cell proliferation"/>
    <property type="evidence" value="ECO:0000315"/>
    <property type="project" value="MGI"/>
</dbReference>
<dbReference type="GO" id="GO:0032760">
    <property type="term" value="P:positive regulation of tumor necrosis factor production"/>
    <property type="evidence" value="ECO:0000315"/>
    <property type="project" value="MGI"/>
</dbReference>
<dbReference type="GO" id="GO:0032729">
    <property type="term" value="P:positive regulation of type II interferon production"/>
    <property type="evidence" value="ECO:0000315"/>
    <property type="project" value="MGI"/>
</dbReference>
<dbReference type="GO" id="GO:0042098">
    <property type="term" value="P:T cell proliferation"/>
    <property type="evidence" value="ECO:0000315"/>
    <property type="project" value="MGI"/>
</dbReference>
<dbReference type="CDD" id="cd11968">
    <property type="entry name" value="SH3_SASH3"/>
    <property type="match status" value="1"/>
</dbReference>
<dbReference type="FunFam" id="1.10.150.50:FF:000024">
    <property type="entry name" value="Putative sam and sh3 domain-containing protein 1"/>
    <property type="match status" value="1"/>
</dbReference>
<dbReference type="FunFam" id="2.30.30.40:FF:000021">
    <property type="entry name" value="Putative sam and sh3 domain-containing protein 1"/>
    <property type="match status" value="1"/>
</dbReference>
<dbReference type="Gene3D" id="2.30.30.40">
    <property type="entry name" value="SH3 Domains"/>
    <property type="match status" value="1"/>
</dbReference>
<dbReference type="Gene3D" id="1.10.150.50">
    <property type="entry name" value="Transcription Factor, Ets-1"/>
    <property type="match status" value="1"/>
</dbReference>
<dbReference type="InterPro" id="IPR001660">
    <property type="entry name" value="SAM"/>
</dbReference>
<dbReference type="InterPro" id="IPR051725">
    <property type="entry name" value="SAM-SH3_domain_protein"/>
</dbReference>
<dbReference type="InterPro" id="IPR013761">
    <property type="entry name" value="SAM/pointed_sf"/>
</dbReference>
<dbReference type="InterPro" id="IPR035721">
    <property type="entry name" value="SASH3_SH3"/>
</dbReference>
<dbReference type="InterPro" id="IPR036028">
    <property type="entry name" value="SH3-like_dom_sf"/>
</dbReference>
<dbReference type="InterPro" id="IPR001452">
    <property type="entry name" value="SH3_domain"/>
</dbReference>
<dbReference type="InterPro" id="IPR021090">
    <property type="entry name" value="SPIDER"/>
</dbReference>
<dbReference type="PANTHER" id="PTHR12301:SF5">
    <property type="entry name" value="SAM AND SH3 DOMAIN-CONTAINING PROTEIN 3"/>
    <property type="match status" value="1"/>
</dbReference>
<dbReference type="PANTHER" id="PTHR12301">
    <property type="entry name" value="SAM-DOMAIN, SH3 AND NUCLEAR LOCALIZATION SIGNALS PROTEIN RELATED"/>
    <property type="match status" value="1"/>
</dbReference>
<dbReference type="Pfam" id="PF00536">
    <property type="entry name" value="SAM_1"/>
    <property type="match status" value="1"/>
</dbReference>
<dbReference type="Pfam" id="PF07653">
    <property type="entry name" value="SH3_2"/>
    <property type="match status" value="1"/>
</dbReference>
<dbReference type="Pfam" id="PF12485">
    <property type="entry name" value="SPIDER"/>
    <property type="match status" value="1"/>
</dbReference>
<dbReference type="SMART" id="SM00454">
    <property type="entry name" value="SAM"/>
    <property type="match status" value="1"/>
</dbReference>
<dbReference type="SMART" id="SM00326">
    <property type="entry name" value="SH3"/>
    <property type="match status" value="1"/>
</dbReference>
<dbReference type="SUPFAM" id="SSF47769">
    <property type="entry name" value="SAM/Pointed domain"/>
    <property type="match status" value="1"/>
</dbReference>
<dbReference type="SUPFAM" id="SSF50044">
    <property type="entry name" value="SH3-domain"/>
    <property type="match status" value="1"/>
</dbReference>
<dbReference type="PROSITE" id="PS50105">
    <property type="entry name" value="SAM_DOMAIN"/>
    <property type="match status" value="1"/>
</dbReference>
<dbReference type="PROSITE" id="PS50002">
    <property type="entry name" value="SH3"/>
    <property type="match status" value="1"/>
</dbReference>
<comment type="function">
    <text evidence="5">May function as a signaling adapter protein in lymphocytes.</text>
</comment>
<comment type="tissue specificity">
    <text evidence="5">Preferentially expressed in lymphoid tissues. Expressed in bone marrow, thymus, spleen, lymph nodes and Peyer patches of gut. In the spleen and lymph nodes, expressed in both T- and B-cells. In the thymus, in the medulla and cortex.</text>
</comment>
<accession>Q8K352</accession>
<accession>Q3TBX0</accession>
<accession>Q9DBV2</accession>
<organism>
    <name type="scientific">Mus musculus</name>
    <name type="common">Mouse</name>
    <dbReference type="NCBI Taxonomy" id="10090"/>
    <lineage>
        <taxon>Eukaryota</taxon>
        <taxon>Metazoa</taxon>
        <taxon>Chordata</taxon>
        <taxon>Craniata</taxon>
        <taxon>Vertebrata</taxon>
        <taxon>Euteleostomi</taxon>
        <taxon>Mammalia</taxon>
        <taxon>Eutheria</taxon>
        <taxon>Euarchontoglires</taxon>
        <taxon>Glires</taxon>
        <taxon>Rodentia</taxon>
        <taxon>Myomorpha</taxon>
        <taxon>Muroidea</taxon>
        <taxon>Muridae</taxon>
        <taxon>Murinae</taxon>
        <taxon>Mus</taxon>
        <taxon>Mus</taxon>
    </lineage>
</organism>
<gene>
    <name type="primary">Sash3</name>
    <name type="synonym">Sly</name>
</gene>
<keyword id="KW-0002">3D-structure</keyword>
<keyword id="KW-0597">Phosphoprotein</keyword>
<keyword id="KW-1185">Reference proteome</keyword>
<keyword id="KW-0728">SH3 domain</keyword>
<proteinExistence type="evidence at protein level"/>
<protein>
    <recommendedName>
        <fullName>SAM and SH3 domain-containing protein 3</fullName>
    </recommendedName>
    <alternativeName>
        <fullName>SH3 protein expressed in lymphocytes</fullName>
    </alternativeName>
</protein>
<reference key="1">
    <citation type="journal article" date="2001" name="Biochim. Biophys. Acta">
        <title>Molecular cloning and characterization of a novel SH3 protein (SLY) preferentially expressed in lymphoid cells.</title>
        <authorList>
            <person name="Beer S."/>
            <person name="Simins A.B."/>
            <person name="Schuster A."/>
            <person name="Holzmann B."/>
        </authorList>
    </citation>
    <scope>NUCLEOTIDE SEQUENCE [MRNA]</scope>
    <scope>FUNCTION</scope>
    <scope>TISSUE SPECIFICITY</scope>
    <source>
        <tissue>T-cell lymphoma</tissue>
    </source>
</reference>
<reference key="2">
    <citation type="journal article" date="2005" name="Science">
        <title>The transcriptional landscape of the mammalian genome.</title>
        <authorList>
            <person name="Carninci P."/>
            <person name="Kasukawa T."/>
            <person name="Katayama S."/>
            <person name="Gough J."/>
            <person name="Frith M.C."/>
            <person name="Maeda N."/>
            <person name="Oyama R."/>
            <person name="Ravasi T."/>
            <person name="Lenhard B."/>
            <person name="Wells C."/>
            <person name="Kodzius R."/>
            <person name="Shimokawa K."/>
            <person name="Bajic V.B."/>
            <person name="Brenner S.E."/>
            <person name="Batalov S."/>
            <person name="Forrest A.R."/>
            <person name="Zavolan M."/>
            <person name="Davis M.J."/>
            <person name="Wilming L.G."/>
            <person name="Aidinis V."/>
            <person name="Allen J.E."/>
            <person name="Ambesi-Impiombato A."/>
            <person name="Apweiler R."/>
            <person name="Aturaliya R.N."/>
            <person name="Bailey T.L."/>
            <person name="Bansal M."/>
            <person name="Baxter L."/>
            <person name="Beisel K.W."/>
            <person name="Bersano T."/>
            <person name="Bono H."/>
            <person name="Chalk A.M."/>
            <person name="Chiu K.P."/>
            <person name="Choudhary V."/>
            <person name="Christoffels A."/>
            <person name="Clutterbuck D.R."/>
            <person name="Crowe M.L."/>
            <person name="Dalla E."/>
            <person name="Dalrymple B.P."/>
            <person name="de Bono B."/>
            <person name="Della Gatta G."/>
            <person name="di Bernardo D."/>
            <person name="Down T."/>
            <person name="Engstrom P."/>
            <person name="Fagiolini M."/>
            <person name="Faulkner G."/>
            <person name="Fletcher C.F."/>
            <person name="Fukushima T."/>
            <person name="Furuno M."/>
            <person name="Futaki S."/>
            <person name="Gariboldi M."/>
            <person name="Georgii-Hemming P."/>
            <person name="Gingeras T.R."/>
            <person name="Gojobori T."/>
            <person name="Green R.E."/>
            <person name="Gustincich S."/>
            <person name="Harbers M."/>
            <person name="Hayashi Y."/>
            <person name="Hensch T.K."/>
            <person name="Hirokawa N."/>
            <person name="Hill D."/>
            <person name="Huminiecki L."/>
            <person name="Iacono M."/>
            <person name="Ikeo K."/>
            <person name="Iwama A."/>
            <person name="Ishikawa T."/>
            <person name="Jakt M."/>
            <person name="Kanapin A."/>
            <person name="Katoh M."/>
            <person name="Kawasawa Y."/>
            <person name="Kelso J."/>
            <person name="Kitamura H."/>
            <person name="Kitano H."/>
            <person name="Kollias G."/>
            <person name="Krishnan S.P."/>
            <person name="Kruger A."/>
            <person name="Kummerfeld S.K."/>
            <person name="Kurochkin I.V."/>
            <person name="Lareau L.F."/>
            <person name="Lazarevic D."/>
            <person name="Lipovich L."/>
            <person name="Liu J."/>
            <person name="Liuni S."/>
            <person name="McWilliam S."/>
            <person name="Madan Babu M."/>
            <person name="Madera M."/>
            <person name="Marchionni L."/>
            <person name="Matsuda H."/>
            <person name="Matsuzawa S."/>
            <person name="Miki H."/>
            <person name="Mignone F."/>
            <person name="Miyake S."/>
            <person name="Morris K."/>
            <person name="Mottagui-Tabar S."/>
            <person name="Mulder N."/>
            <person name="Nakano N."/>
            <person name="Nakauchi H."/>
            <person name="Ng P."/>
            <person name="Nilsson R."/>
            <person name="Nishiguchi S."/>
            <person name="Nishikawa S."/>
            <person name="Nori F."/>
            <person name="Ohara O."/>
            <person name="Okazaki Y."/>
            <person name="Orlando V."/>
            <person name="Pang K.C."/>
            <person name="Pavan W.J."/>
            <person name="Pavesi G."/>
            <person name="Pesole G."/>
            <person name="Petrovsky N."/>
            <person name="Piazza S."/>
            <person name="Reed J."/>
            <person name="Reid J.F."/>
            <person name="Ring B.Z."/>
            <person name="Ringwald M."/>
            <person name="Rost B."/>
            <person name="Ruan Y."/>
            <person name="Salzberg S.L."/>
            <person name="Sandelin A."/>
            <person name="Schneider C."/>
            <person name="Schoenbach C."/>
            <person name="Sekiguchi K."/>
            <person name="Semple C.A."/>
            <person name="Seno S."/>
            <person name="Sessa L."/>
            <person name="Sheng Y."/>
            <person name="Shibata Y."/>
            <person name="Shimada H."/>
            <person name="Shimada K."/>
            <person name="Silva D."/>
            <person name="Sinclair B."/>
            <person name="Sperling S."/>
            <person name="Stupka E."/>
            <person name="Sugiura K."/>
            <person name="Sultana R."/>
            <person name="Takenaka Y."/>
            <person name="Taki K."/>
            <person name="Tammoja K."/>
            <person name="Tan S.L."/>
            <person name="Tang S."/>
            <person name="Taylor M.S."/>
            <person name="Tegner J."/>
            <person name="Teichmann S.A."/>
            <person name="Ueda H.R."/>
            <person name="van Nimwegen E."/>
            <person name="Verardo R."/>
            <person name="Wei C.L."/>
            <person name="Yagi K."/>
            <person name="Yamanishi H."/>
            <person name="Zabarovsky E."/>
            <person name="Zhu S."/>
            <person name="Zimmer A."/>
            <person name="Hide W."/>
            <person name="Bult C."/>
            <person name="Grimmond S.M."/>
            <person name="Teasdale R.D."/>
            <person name="Liu E.T."/>
            <person name="Brusic V."/>
            <person name="Quackenbush J."/>
            <person name="Wahlestedt C."/>
            <person name="Mattick J.S."/>
            <person name="Hume D.A."/>
            <person name="Kai C."/>
            <person name="Sasaki D."/>
            <person name="Tomaru Y."/>
            <person name="Fukuda S."/>
            <person name="Kanamori-Katayama M."/>
            <person name="Suzuki M."/>
            <person name="Aoki J."/>
            <person name="Arakawa T."/>
            <person name="Iida J."/>
            <person name="Imamura K."/>
            <person name="Itoh M."/>
            <person name="Kato T."/>
            <person name="Kawaji H."/>
            <person name="Kawagashira N."/>
            <person name="Kawashima T."/>
            <person name="Kojima M."/>
            <person name="Kondo S."/>
            <person name="Konno H."/>
            <person name="Nakano K."/>
            <person name="Ninomiya N."/>
            <person name="Nishio T."/>
            <person name="Okada M."/>
            <person name="Plessy C."/>
            <person name="Shibata K."/>
            <person name="Shiraki T."/>
            <person name="Suzuki S."/>
            <person name="Tagami M."/>
            <person name="Waki K."/>
            <person name="Watahiki A."/>
            <person name="Okamura-Oho Y."/>
            <person name="Suzuki H."/>
            <person name="Kawai J."/>
            <person name="Hayashizaki Y."/>
        </authorList>
    </citation>
    <scope>NUCLEOTIDE SEQUENCE [LARGE SCALE MRNA]</scope>
    <source>
        <strain>C57BL/6J</strain>
        <strain>NOD</strain>
        <tissue>Dendritic cell</tissue>
        <tissue>Lung</tissue>
        <tissue>Spleen</tissue>
    </source>
</reference>
<reference key="3">
    <citation type="journal article" date="2004" name="Genome Res.">
        <title>The status, quality, and expansion of the NIH full-length cDNA project: the Mammalian Gene Collection (MGC).</title>
        <authorList>
            <consortium name="The MGC Project Team"/>
        </authorList>
    </citation>
    <scope>NUCLEOTIDE SEQUENCE [LARGE SCALE MRNA] OF 104-380</scope>
    <source>
        <strain>C57BL/6J</strain>
        <tissue>Mammary gland</tissue>
    </source>
</reference>
<reference key="4">
    <citation type="journal article" date="2010" name="Cell">
        <title>A tissue-specific atlas of mouse protein phosphorylation and expression.</title>
        <authorList>
            <person name="Huttlin E.L."/>
            <person name="Jedrychowski M.P."/>
            <person name="Elias J.E."/>
            <person name="Goswami T."/>
            <person name="Rad R."/>
            <person name="Beausoleil S.A."/>
            <person name="Villen J."/>
            <person name="Haas W."/>
            <person name="Sowa M.E."/>
            <person name="Gygi S.P."/>
        </authorList>
    </citation>
    <scope>PHOSPHORYLATION [LARGE SCALE ANALYSIS] AT SER-42; SER-97; THR-318 AND SER-320</scope>
    <scope>IDENTIFICATION BY MASS SPECTROMETRY [LARGE SCALE ANALYSIS]</scope>
    <source>
        <tissue>Lung</tissue>
        <tissue>Spleen</tissue>
    </source>
</reference>
<evidence type="ECO:0000250" key="1">
    <source>
        <dbReference type="UniProtKB" id="O75995"/>
    </source>
</evidence>
<evidence type="ECO:0000255" key="2">
    <source>
        <dbReference type="PROSITE-ProRule" id="PRU00184"/>
    </source>
</evidence>
<evidence type="ECO:0000255" key="3">
    <source>
        <dbReference type="PROSITE-ProRule" id="PRU00192"/>
    </source>
</evidence>
<evidence type="ECO:0000256" key="4">
    <source>
        <dbReference type="SAM" id="MobiDB-lite"/>
    </source>
</evidence>
<evidence type="ECO:0000269" key="5">
    <source>
    </source>
</evidence>
<evidence type="ECO:0000305" key="6"/>
<evidence type="ECO:0007744" key="7">
    <source>
    </source>
</evidence>
<evidence type="ECO:0007829" key="8">
    <source>
        <dbReference type="PDB" id="6FXF"/>
    </source>
</evidence>
<name>SASH3_MOUSE</name>
<sequence length="380" mass="41609">MLRRKPSNASDKEPTQKKKLSLQRSSSFKDFAKSKPSSPVVSEKEFNLDDNIPEDDSGVLTPEDSGKSGKKLGKKWRAVISRTMNRKMGKMMVKALSEEMGDTLEEGSASPTSPDCSLDSPGPEKMALAFTEQEEREPPSLSRQTSTGSELCSPGPGSGSFLEESPAPQYTGPFCGRARVHTDFTPSPYDHDSLKLQKGDVIQIVEKPPVGTWLGLLNGKLGSFKFIYVDVLPEEAVGPVRPSRRQSKGKRPKPKTLHELLERIGLEEHTSTLLLNGYQTLEDFKELRETHLNELNIMDPQHRAKLLTAAELLLDYDTGSEEAEEGAESSQEPVAHTVSEPKVDIPRDSGCFEGSESGRDEAELAGTEEQLQGLSLSGAP</sequence>